<name>AMPP2_STRCO</name>
<organism>
    <name type="scientific">Streptomyces coelicolor (strain ATCC BAA-471 / A3(2) / M145)</name>
    <dbReference type="NCBI Taxonomy" id="100226"/>
    <lineage>
        <taxon>Bacteria</taxon>
        <taxon>Bacillati</taxon>
        <taxon>Actinomycetota</taxon>
        <taxon>Actinomycetes</taxon>
        <taxon>Kitasatosporales</taxon>
        <taxon>Streptomycetaceae</taxon>
        <taxon>Streptomyces</taxon>
        <taxon>Streptomyces albidoflavus group</taxon>
    </lineage>
</organism>
<keyword id="KW-0031">Aminopeptidase</keyword>
<keyword id="KW-0378">Hydrolase</keyword>
<keyword id="KW-0464">Manganese</keyword>
<keyword id="KW-0479">Metal-binding</keyword>
<keyword id="KW-0482">Metalloprotease</keyword>
<keyword id="KW-0645">Protease</keyword>
<keyword id="KW-1185">Reference proteome</keyword>
<accession>P0A3Z3</accession>
<accession>Q60394</accession>
<comment type="catalytic activity">
    <reaction>
        <text>Release of any N-terminal amino acid, including proline, that is linked to proline, even from a dipeptide or tripeptide.</text>
        <dbReference type="EC" id="3.4.11.9"/>
    </reaction>
</comment>
<comment type="cofactor">
    <cofactor evidence="1">
        <name>Mn(2+)</name>
        <dbReference type="ChEBI" id="CHEBI:29035"/>
    </cofactor>
    <text evidence="1">Binds 2 manganese ions per subunit.</text>
</comment>
<comment type="subunit">
    <text evidence="1">Homodimer.</text>
</comment>
<comment type="similarity">
    <text evidence="2">Belongs to the peptidase M24B family.</text>
</comment>
<dbReference type="EC" id="3.4.11.9"/>
<dbReference type="EMBL" id="AL939108">
    <property type="protein sequence ID" value="CAB95809.1"/>
    <property type="molecule type" value="Genomic_DNA"/>
</dbReference>
<dbReference type="RefSeq" id="NP_625637.1">
    <property type="nucleotide sequence ID" value="NC_003888.3"/>
</dbReference>
<dbReference type="RefSeq" id="WP_011027739.1">
    <property type="nucleotide sequence ID" value="NZ_VNID01000006.1"/>
</dbReference>
<dbReference type="SMR" id="P0A3Z3"/>
<dbReference type="STRING" id="100226.gene:17758935"/>
<dbReference type="MEROPS" id="M24.033"/>
<dbReference type="PaxDb" id="100226-SCO1352"/>
<dbReference type="KEGG" id="sco:SCO1352"/>
<dbReference type="PATRIC" id="fig|100226.15.peg.1360"/>
<dbReference type="eggNOG" id="COG0006">
    <property type="taxonomic scope" value="Bacteria"/>
</dbReference>
<dbReference type="HOGENOM" id="CLU_017266_1_0_11"/>
<dbReference type="InParanoid" id="P0A3Z3"/>
<dbReference type="OrthoDB" id="9806388at2"/>
<dbReference type="PhylomeDB" id="P0A3Z3"/>
<dbReference type="Proteomes" id="UP000001973">
    <property type="component" value="Chromosome"/>
</dbReference>
<dbReference type="GO" id="GO:0005829">
    <property type="term" value="C:cytosol"/>
    <property type="evidence" value="ECO:0000318"/>
    <property type="project" value="GO_Central"/>
</dbReference>
<dbReference type="GO" id="GO:0004177">
    <property type="term" value="F:aminopeptidase activity"/>
    <property type="evidence" value="ECO:0000318"/>
    <property type="project" value="GO_Central"/>
</dbReference>
<dbReference type="GO" id="GO:0030145">
    <property type="term" value="F:manganese ion binding"/>
    <property type="evidence" value="ECO:0007669"/>
    <property type="project" value="InterPro"/>
</dbReference>
<dbReference type="GO" id="GO:0070006">
    <property type="term" value="F:metalloaminopeptidase activity"/>
    <property type="evidence" value="ECO:0007669"/>
    <property type="project" value="InterPro"/>
</dbReference>
<dbReference type="GO" id="GO:0006508">
    <property type="term" value="P:proteolysis"/>
    <property type="evidence" value="ECO:0000318"/>
    <property type="project" value="GO_Central"/>
</dbReference>
<dbReference type="CDD" id="cd01087">
    <property type="entry name" value="Prolidase"/>
    <property type="match status" value="1"/>
</dbReference>
<dbReference type="Gene3D" id="3.90.230.10">
    <property type="entry name" value="Creatinase/methionine aminopeptidase superfamily"/>
    <property type="match status" value="1"/>
</dbReference>
<dbReference type="Gene3D" id="3.40.350.10">
    <property type="entry name" value="Creatinase/prolidase N-terminal domain"/>
    <property type="match status" value="1"/>
</dbReference>
<dbReference type="InterPro" id="IPR007865">
    <property type="entry name" value="Aminopep_P_N"/>
</dbReference>
<dbReference type="InterPro" id="IPR029149">
    <property type="entry name" value="Creatin/AminoP/Spt16_N"/>
</dbReference>
<dbReference type="InterPro" id="IPR036005">
    <property type="entry name" value="Creatinase/aminopeptidase-like"/>
</dbReference>
<dbReference type="InterPro" id="IPR000994">
    <property type="entry name" value="Pept_M24"/>
</dbReference>
<dbReference type="InterPro" id="IPR001131">
    <property type="entry name" value="Peptidase_M24B_aminopep-P_CS"/>
</dbReference>
<dbReference type="InterPro" id="IPR052433">
    <property type="entry name" value="X-Pro_dipept-like"/>
</dbReference>
<dbReference type="PANTHER" id="PTHR43226">
    <property type="entry name" value="XAA-PRO AMINOPEPTIDASE 3"/>
    <property type="match status" value="1"/>
</dbReference>
<dbReference type="PANTHER" id="PTHR43226:SF4">
    <property type="entry name" value="XAA-PRO AMINOPEPTIDASE 3"/>
    <property type="match status" value="1"/>
</dbReference>
<dbReference type="Pfam" id="PF05195">
    <property type="entry name" value="AMP_N"/>
    <property type="match status" value="1"/>
</dbReference>
<dbReference type="Pfam" id="PF00557">
    <property type="entry name" value="Peptidase_M24"/>
    <property type="match status" value="1"/>
</dbReference>
<dbReference type="SMART" id="SM01011">
    <property type="entry name" value="AMP_N"/>
    <property type="match status" value="1"/>
</dbReference>
<dbReference type="SUPFAM" id="SSF55920">
    <property type="entry name" value="Creatinase/aminopeptidase"/>
    <property type="match status" value="1"/>
</dbReference>
<dbReference type="SUPFAM" id="SSF53092">
    <property type="entry name" value="Creatinase/prolidase N-terminal domain"/>
    <property type="match status" value="1"/>
</dbReference>
<dbReference type="PROSITE" id="PS00491">
    <property type="entry name" value="PROLINE_PEPTIDASE"/>
    <property type="match status" value="1"/>
</dbReference>
<protein>
    <recommendedName>
        <fullName>Xaa-Pro aminopeptidase 2</fullName>
        <ecNumber>3.4.11.9</ecNumber>
    </recommendedName>
    <alternativeName>
        <fullName>Aminoacylproline aminopeptidase II</fullName>
    </alternativeName>
    <alternativeName>
        <fullName>Aminopeptidase P II</fullName>
        <shortName>APP</shortName>
        <shortName>PEPP II</shortName>
    </alternativeName>
    <alternativeName>
        <fullName>X-Pro aminopeptidase II</fullName>
    </alternativeName>
    <alternativeName>
        <fullName>Xaa-Pro aminopeptidase II</fullName>
    </alternativeName>
</protein>
<evidence type="ECO:0000250" key="1"/>
<evidence type="ECO:0000305" key="2"/>
<sequence>MSNRRKNSLYPTLSAELSALMRTGWADTERHDLAPAEQAPYAALRRAALSARFPGERLVVPSGNLKVRSNDDTYPFRSYSGYVHMTGDQARDGALVLEPRPDGGHDAYCYQLPRDSRDDDEFWTGAHAELWTGRRRSLAESERVLGLPCRDVRTAAADLAAVSEVRTRIVRGIDPALEAAVTTDEERDAELEDALSDLRLVKDAWELGELRKAVDSTVRGFTDVVGELSRAVASSERWLEGTFFRRARLEGNAVGYGTICAAGEHATIMHWTDNDGPVRPGDLLLLDAGVETRSLYTADVTRTLPISGTFTPLQREVYDAVYEAQEAGIATVKPGAAYRDFHEAAQRHLAARLVEWGFIEGPAERAYELGLQRRFTMAGTGHMLGLDVHDCARARTEEYVEGVLEPGMCLTVEPGLYFQADDLTVPEEWRGIGVRIEDDLVVTEDGHENLSAGLPRSADEVEAWMARFAG</sequence>
<proteinExistence type="inferred from homology"/>
<reference key="1">
    <citation type="journal article" date="2002" name="Nature">
        <title>Complete genome sequence of the model actinomycete Streptomyces coelicolor A3(2).</title>
        <authorList>
            <person name="Bentley S.D."/>
            <person name="Chater K.F."/>
            <person name="Cerdeno-Tarraga A.-M."/>
            <person name="Challis G.L."/>
            <person name="Thomson N.R."/>
            <person name="James K.D."/>
            <person name="Harris D.E."/>
            <person name="Quail M.A."/>
            <person name="Kieser H."/>
            <person name="Harper D."/>
            <person name="Bateman A."/>
            <person name="Brown S."/>
            <person name="Chandra G."/>
            <person name="Chen C.W."/>
            <person name="Collins M."/>
            <person name="Cronin A."/>
            <person name="Fraser A."/>
            <person name="Goble A."/>
            <person name="Hidalgo J."/>
            <person name="Hornsby T."/>
            <person name="Howarth S."/>
            <person name="Huang C.-H."/>
            <person name="Kieser T."/>
            <person name="Larke L."/>
            <person name="Murphy L.D."/>
            <person name="Oliver K."/>
            <person name="O'Neil S."/>
            <person name="Rabbinowitsch E."/>
            <person name="Rajandream M.A."/>
            <person name="Rutherford K.M."/>
            <person name="Rutter S."/>
            <person name="Seeger K."/>
            <person name="Saunders D."/>
            <person name="Sharp S."/>
            <person name="Squares R."/>
            <person name="Squares S."/>
            <person name="Taylor K."/>
            <person name="Warren T."/>
            <person name="Wietzorrek A."/>
            <person name="Woodward J.R."/>
            <person name="Barrell B.G."/>
            <person name="Parkhill J."/>
            <person name="Hopwood D.A."/>
        </authorList>
    </citation>
    <scope>NUCLEOTIDE SEQUENCE [LARGE SCALE GENOMIC DNA]</scope>
    <source>
        <strain>ATCC BAA-471 / A3(2) / M145</strain>
    </source>
</reference>
<feature type="chain" id="PRO_0000185080" description="Xaa-Pro aminopeptidase 2">
    <location>
        <begin position="1"/>
        <end position="470"/>
    </location>
</feature>
<feature type="binding site" evidence="1">
    <location>
        <position position="287"/>
    </location>
    <ligand>
        <name>Mn(2+)</name>
        <dbReference type="ChEBI" id="CHEBI:29035"/>
        <label>2</label>
    </ligand>
</feature>
<feature type="binding site" evidence="1">
    <location>
        <position position="299"/>
    </location>
    <ligand>
        <name>Mn(2+)</name>
        <dbReference type="ChEBI" id="CHEBI:29035"/>
        <label>1</label>
    </ligand>
</feature>
<feature type="binding site" evidence="1">
    <location>
        <position position="299"/>
    </location>
    <ligand>
        <name>Mn(2+)</name>
        <dbReference type="ChEBI" id="CHEBI:29035"/>
        <label>2</label>
    </ligand>
</feature>
<feature type="binding site" evidence="1">
    <location>
        <position position="382"/>
    </location>
    <ligand>
        <name>Mn(2+)</name>
        <dbReference type="ChEBI" id="CHEBI:29035"/>
        <label>1</label>
    </ligand>
</feature>
<feature type="binding site" evidence="1">
    <location>
        <position position="413"/>
    </location>
    <ligand>
        <name>Mn(2+)</name>
        <dbReference type="ChEBI" id="CHEBI:29035"/>
        <label>1</label>
    </ligand>
</feature>
<feature type="binding site" evidence="1">
    <location>
        <position position="437"/>
    </location>
    <ligand>
        <name>Mn(2+)</name>
        <dbReference type="ChEBI" id="CHEBI:29035"/>
        <label>1</label>
    </ligand>
</feature>
<feature type="binding site" evidence="1">
    <location>
        <position position="437"/>
    </location>
    <ligand>
        <name>Mn(2+)</name>
        <dbReference type="ChEBI" id="CHEBI:29035"/>
        <label>2</label>
    </ligand>
</feature>
<gene>
    <name type="primary">pepP2</name>
    <name type="ordered locus">SCO1352</name>
    <name type="ORF">2SCG61.34c</name>
</gene>